<reference key="1">
    <citation type="journal article" date="2000" name="Infect. Immun.">
        <title>Two allelic forms of the aureolysin gene (aur) within Staphylococcus aureus.</title>
        <authorList>
            <person name="Sabat A."/>
            <person name="Kosowska K."/>
            <person name="Poulsen K."/>
            <person name="Kasprowicz A."/>
            <person name="Sekowska A."/>
            <person name="van Den Burg B."/>
            <person name="Travis J."/>
            <person name="Potempa J."/>
        </authorList>
    </citation>
    <scope>NUCLEOTIDE SEQUENCE [GENOMIC DNA]</scope>
    <source>
        <strain>022</strain>
        <strain>V8-BC10</strain>
    </source>
</reference>
<reference evidence="10" key="2">
    <citation type="journal article" date="1998" name="Structure">
        <title>Amino-acid sequence and three-dimensional structure of the Staphylococcus aureus metalloproteinase at 1.72-A resolution.</title>
        <authorList>
            <person name="Banbula A."/>
            <person name="Potempa J."/>
            <person name="Travis J."/>
            <person name="Fernandez-Catalan C."/>
            <person name="Mann K."/>
            <person name="Huber R."/>
            <person name="Bode W."/>
            <person name="Medrano F.J."/>
        </authorList>
    </citation>
    <scope>PROTEIN SEQUENCE OF 209-509</scope>
    <scope>X-RAY CRYSTALLOGRAPHY (1.72 ANGSTROMS) OF 209-509 IN COMPLEX WITH CALCIUM AND ZINC</scope>
    <scope>PROBABLE ACTIVE SITE</scope>
    <scope>COFACTOR</scope>
    <scope>SUBUNIT</scope>
    <source>
        <strain>ATCC 27733 / V8</strain>
    </source>
</reference>
<reference key="3">
    <citation type="journal article" date="1986" name="J. Biol. Chem.">
        <title>The inactivation of human plasma alpha 1-proteinase inhibitor by proteinases from Staphylococcus aureus.</title>
        <authorList>
            <person name="Potempa J."/>
            <person name="Watorek W."/>
            <person name="Travis J."/>
        </authorList>
    </citation>
    <scope>FUNCTION</scope>
</reference>
<reference key="4">
    <citation type="journal article" date="2007" name="J. Biol. Chem.">
        <title>Activation of the SspA serine protease zymogen of Staphylococcus aureus proceeds through unique variations of a trypsinogen-like mechanism and is dependent on both autocatalytic and metalloprotease-specific processing.</title>
        <authorList>
            <person name="Nickerson N.N."/>
            <person name="Prasad L."/>
            <person name="Jacob L."/>
            <person name="Delbaere L.T."/>
            <person name="McGavin M.J."/>
        </authorList>
    </citation>
    <scope>FUNCTION</scope>
    <scope>CATALYTIC ACTIVITY</scope>
    <source>
        <strain>UAMS-1182</strain>
    </source>
</reference>
<reference key="5">
    <citation type="journal article" date="2011" name="J. Immunol.">
        <title>Staphylococcus aureus metalloprotease aureolysin cleaves complement C3 to mediate immune evasion.</title>
        <authorList>
            <person name="Laarman A.J."/>
            <person name="Ruyken M."/>
            <person name="Malone C.L."/>
            <person name="van Strijp J.A."/>
            <person name="Horswill A.R."/>
            <person name="Rooijakkers S.H."/>
        </authorList>
    </citation>
    <scope>FUNCTION</scope>
    <source>
        <strain>UAMS-1182</strain>
    </source>
</reference>
<dbReference type="EC" id="3.4.24.29" evidence="2"/>
<dbReference type="EMBL" id="AJ249166">
    <property type="protein sequence ID" value="CAB59567.1"/>
    <property type="molecule type" value="Genomic_DNA"/>
</dbReference>
<dbReference type="EMBL" id="AJ249167">
    <property type="protein sequence ID" value="CAB59568.1"/>
    <property type="molecule type" value="Genomic_DNA"/>
</dbReference>
<dbReference type="RefSeq" id="WP_001225040.1">
    <property type="nucleotide sequence ID" value="NZ_WKIW01000009.1"/>
</dbReference>
<dbReference type="PDB" id="1BQB">
    <property type="method" value="X-ray"/>
    <property type="resolution" value="1.72 A"/>
    <property type="chains" value="A=209-509"/>
</dbReference>
<dbReference type="PDB" id="7SKL">
    <property type="method" value="X-ray"/>
    <property type="resolution" value="1.60 A"/>
    <property type="chains" value="A/C=209-509"/>
</dbReference>
<dbReference type="PDB" id="7SKM">
    <property type="method" value="X-ray"/>
    <property type="resolution" value="1.85 A"/>
    <property type="chains" value="A/C=209-509"/>
</dbReference>
<dbReference type="PDBsum" id="1BQB"/>
<dbReference type="PDBsum" id="7SKL"/>
<dbReference type="PDBsum" id="7SKM"/>
<dbReference type="SMR" id="P81177"/>
<dbReference type="MEROPS" id="M04.009"/>
<dbReference type="OMA" id="WKHIKLT"/>
<dbReference type="BRENDA" id="3.4.24.29">
    <property type="organism ID" value="3352"/>
</dbReference>
<dbReference type="EvolutionaryTrace" id="P81177"/>
<dbReference type="PHI-base" id="PHI:11228"/>
<dbReference type="GO" id="GO:0046872">
    <property type="term" value="F:metal ion binding"/>
    <property type="evidence" value="ECO:0007669"/>
    <property type="project" value="UniProtKB-KW"/>
</dbReference>
<dbReference type="GO" id="GO:0004222">
    <property type="term" value="F:metalloendopeptidase activity"/>
    <property type="evidence" value="ECO:0007669"/>
    <property type="project" value="InterPro"/>
</dbReference>
<dbReference type="GO" id="GO:0006508">
    <property type="term" value="P:proteolysis"/>
    <property type="evidence" value="ECO:0007669"/>
    <property type="project" value="UniProtKB-KW"/>
</dbReference>
<dbReference type="CDD" id="cd09597">
    <property type="entry name" value="M4_TLP"/>
    <property type="match status" value="1"/>
</dbReference>
<dbReference type="Gene3D" id="3.10.170.10">
    <property type="match status" value="1"/>
</dbReference>
<dbReference type="Gene3D" id="3.10.450.40">
    <property type="match status" value="1"/>
</dbReference>
<dbReference type="Gene3D" id="1.10.390.10">
    <property type="entry name" value="Neutral Protease Domain 2"/>
    <property type="match status" value="1"/>
</dbReference>
<dbReference type="InterPro" id="IPR011096">
    <property type="entry name" value="FTP_domain"/>
</dbReference>
<dbReference type="InterPro" id="IPR025711">
    <property type="entry name" value="PepSY"/>
</dbReference>
<dbReference type="InterPro" id="IPR023612">
    <property type="entry name" value="Peptidase_M4"/>
</dbReference>
<dbReference type="InterPro" id="IPR027268">
    <property type="entry name" value="Peptidase_M4/M1_CTD_sf"/>
</dbReference>
<dbReference type="InterPro" id="IPR001570">
    <property type="entry name" value="Peptidase_M4_C_domain"/>
</dbReference>
<dbReference type="InterPro" id="IPR013856">
    <property type="entry name" value="Peptidase_M4_domain"/>
</dbReference>
<dbReference type="InterPro" id="IPR050728">
    <property type="entry name" value="Zinc_Metalloprotease_M4"/>
</dbReference>
<dbReference type="PANTHER" id="PTHR33794">
    <property type="entry name" value="BACILLOLYSIN"/>
    <property type="match status" value="1"/>
</dbReference>
<dbReference type="PANTHER" id="PTHR33794:SF1">
    <property type="entry name" value="BACILLOLYSIN"/>
    <property type="match status" value="1"/>
</dbReference>
<dbReference type="Pfam" id="PF07504">
    <property type="entry name" value="FTP"/>
    <property type="match status" value="1"/>
</dbReference>
<dbReference type="Pfam" id="PF03413">
    <property type="entry name" value="PepSY"/>
    <property type="match status" value="1"/>
</dbReference>
<dbReference type="Pfam" id="PF01447">
    <property type="entry name" value="Peptidase_M4"/>
    <property type="match status" value="1"/>
</dbReference>
<dbReference type="Pfam" id="PF02868">
    <property type="entry name" value="Peptidase_M4_C"/>
    <property type="match status" value="1"/>
</dbReference>
<dbReference type="PRINTS" id="PR00730">
    <property type="entry name" value="THERMOLYSIN"/>
</dbReference>
<dbReference type="SUPFAM" id="SSF55486">
    <property type="entry name" value="Metalloproteases ('zincins'), catalytic domain"/>
    <property type="match status" value="1"/>
</dbReference>
<dbReference type="PROSITE" id="PS00142">
    <property type="entry name" value="ZINC_PROTEASE"/>
    <property type="match status" value="1"/>
</dbReference>
<protein>
    <recommendedName>
        <fullName evidence="7">Zinc metalloproteinase aureolysin</fullName>
        <ecNumber evidence="2">3.4.24.29</ecNumber>
    </recommendedName>
    <alternativeName>
        <fullName>Staphylococcus aureus neutral proteinase</fullName>
    </alternativeName>
</protein>
<name>AURE_STAAU</name>
<keyword id="KW-0002">3D-structure</keyword>
<keyword id="KW-0106">Calcium</keyword>
<keyword id="KW-0903">Direct protein sequencing</keyword>
<keyword id="KW-0378">Hydrolase</keyword>
<keyword id="KW-0479">Metal-binding</keyword>
<keyword id="KW-0482">Metalloprotease</keyword>
<keyword id="KW-0645">Protease</keyword>
<keyword id="KW-0732">Signal</keyword>
<keyword id="KW-0843">Virulence</keyword>
<keyword id="KW-0862">Zinc</keyword>
<keyword id="KW-0865">Zymogen</keyword>
<evidence type="ECO:0000255" key="1"/>
<evidence type="ECO:0000269" key="2">
    <source>
    </source>
</evidence>
<evidence type="ECO:0000269" key="3">
    <source>
    </source>
</evidence>
<evidence type="ECO:0000269" key="4">
    <source>
    </source>
</evidence>
<evidence type="ECO:0000269" key="5">
    <source>
    </source>
</evidence>
<evidence type="ECO:0000303" key="6">
    <source>
    </source>
</evidence>
<evidence type="ECO:0000303" key="7">
    <source>
    </source>
</evidence>
<evidence type="ECO:0000305" key="8"/>
<evidence type="ECO:0000305" key="9">
    <source>
    </source>
</evidence>
<evidence type="ECO:0007744" key="10">
    <source>
        <dbReference type="PDB" id="1BQB"/>
    </source>
</evidence>
<evidence type="ECO:0007829" key="11">
    <source>
        <dbReference type="PDB" id="7SKL"/>
    </source>
</evidence>
<evidence type="ECO:0007829" key="12">
    <source>
        <dbReference type="PDB" id="7SKM"/>
    </source>
</evidence>
<accession>P81177</accession>
<accession>Q9R2Z8</accession>
<comment type="function">
    <text evidence="2 3 4">Plays an essential role in immune evasion by helping bacteria to resist complement-mediated killing by neutrophils. Inhibits the deposition of host C3b on bacterial surfaces and the release of the chemoattractant C5a by cleaving the central complement protein C3. The cleavage site renders the C3b molecule vulnerable to proteolytic degradation by host regulators (PubMed:21502375). Cleaves and inactivates host SERPINA1, which is an endogenous protease inhibitor essential for controlling neutrophil serine protease elastase (PubMed:3533918). Also plays an essential role in the cleavage and subsequent activation of the serine protease SspA (glutamyl endopeptidase) which is involved in colonization and infection of human tissues (PubMed:17878159).</text>
</comment>
<comment type="catalytic activity">
    <reaction evidence="2">
        <text>Cleavage of insulin B chain with specificity similar to that of thermolysin, preferring hydrophobic P1' residues. Activates the glutamyl endopeptidase (EC 3.4.21.19) of Staphylococcus aureus.</text>
        <dbReference type="EC" id="3.4.24.29"/>
    </reaction>
</comment>
<comment type="cofactor">
    <cofactor evidence="5 10">
        <name>Ca(2+)</name>
        <dbReference type="ChEBI" id="CHEBI:29108"/>
    </cofactor>
    <text evidence="5 10">Binds 3 Ca(2+) ions per subunit.</text>
</comment>
<comment type="cofactor">
    <cofactor evidence="5 10">
        <name>Zn(2+)</name>
        <dbReference type="ChEBI" id="CHEBI:29105"/>
    </cofactor>
    <text evidence="5 10">Binds 1 zinc ion per subunit.</text>
</comment>
<comment type="subunit">
    <text evidence="9">Monomer.</text>
</comment>
<comment type="similarity">
    <text evidence="8">Belongs to the peptidase M4 family.</text>
</comment>
<organism>
    <name type="scientific">Staphylococcus aureus</name>
    <dbReference type="NCBI Taxonomy" id="1280"/>
    <lineage>
        <taxon>Bacteria</taxon>
        <taxon>Bacillati</taxon>
        <taxon>Bacillota</taxon>
        <taxon>Bacilli</taxon>
        <taxon>Bacillales</taxon>
        <taxon>Staphylococcaceae</taxon>
        <taxon>Staphylococcus</taxon>
    </lineage>
</organism>
<sequence>MRKFSRYAFTSMATVTLLSSLTPAALASDTNHKPATSDINFEITQKSDAVKALKELPKSENVKNHYQDYSVTDVKTDKKGFTHYTLQPSVDGVHAPDKEVKVHADKSGKVVLINGDTDAKKVKPTNKVTLSKDEAADKAFNAVKIDKNKAKNLQDDVIKENKVEIDGDSNKYIYNIELITVTPEISHWKVKIDADTGAVVEKTNLVKEAAATGTGKGVLGDTKDININSIDGGFSLEDLTHQGKLSAYNFNDQTGQATLITNEDENFVKDDQRAGVDANYYAKQTYDYYKNTFGRESYDNHGSPIVSLTHVNHYGGQDNRNNAAWIGDKMIYGDGDGRTFTNLSGANDVVAHELTHGVTQETANLEYKDQSGALNESFSDVFGYFVDDEDFLMGEDVYTPGKEGDALRSMSNPEQFGQPSHMKDYVYTEKDNGGVHTNSGIPNKAAYNVIQAIGKSKSEQIYYRALTEYLTSNSNFKDCKDALYQAAKDLYDEQTAEQVYEAWNEVGVE</sequence>
<gene>
    <name evidence="6" type="primary">aur</name>
</gene>
<proteinExistence type="evidence at protein level"/>
<feature type="signal peptide" evidence="1">
    <location>
        <begin position="1"/>
        <end position="27"/>
    </location>
</feature>
<feature type="propeptide" id="PRO_0000028614" evidence="5">
    <location>
        <begin position="28"/>
        <end position="208"/>
    </location>
</feature>
<feature type="chain" id="PRO_0000028615" description="Zinc metalloproteinase aureolysin">
    <location>
        <begin position="209"/>
        <end position="509"/>
    </location>
</feature>
<feature type="active site" evidence="9">
    <location>
        <position position="353"/>
    </location>
</feature>
<feature type="active site" description="Proton donor">
    <location>
        <position position="436"/>
    </location>
</feature>
<feature type="binding site" evidence="5 10">
    <location>
        <position position="348"/>
    </location>
    <ligand>
        <name>Ca(2+)</name>
        <dbReference type="ChEBI" id="CHEBI:29108"/>
        <label>1</label>
    </ligand>
</feature>
<feature type="binding site" evidence="5 10">
    <location>
        <position position="352"/>
    </location>
    <ligand>
        <name>Zn(2+)</name>
        <dbReference type="ChEBI" id="CHEBI:29105"/>
        <note>catalytic</note>
    </ligand>
</feature>
<feature type="binding site" evidence="5 10">
    <location>
        <position position="356"/>
    </location>
    <ligand>
        <name>Zn(2+)</name>
        <dbReference type="ChEBI" id="CHEBI:29105"/>
        <note>catalytic</note>
    </ligand>
</feature>
<feature type="binding site" evidence="5 10">
    <location>
        <position position="376"/>
    </location>
    <ligand>
        <name>Zn(2+)</name>
        <dbReference type="ChEBI" id="CHEBI:29105"/>
        <note>catalytic</note>
    </ligand>
</feature>
<feature type="binding site" evidence="5 10">
    <location>
        <position position="387"/>
    </location>
    <ligand>
        <name>Ca(2+)</name>
        <dbReference type="ChEBI" id="CHEBI:29108"/>
        <label>1</label>
    </ligand>
</feature>
<feature type="binding site" evidence="5 10">
    <location>
        <position position="387"/>
    </location>
    <ligand>
        <name>Ca(2+)</name>
        <dbReference type="ChEBI" id="CHEBI:29108"/>
        <label>2</label>
    </ligand>
</feature>
<feature type="binding site" evidence="5 10">
    <location>
        <position position="389"/>
    </location>
    <ligand>
        <name>Ca(2+)</name>
        <dbReference type="ChEBI" id="CHEBI:29108"/>
        <label>2</label>
    </ligand>
</feature>
<feature type="binding site" evidence="5 10">
    <location>
        <position position="390"/>
    </location>
    <ligand>
        <name>Ca(2+)</name>
        <dbReference type="ChEBI" id="CHEBI:29108"/>
        <label>1</label>
    </ligand>
</feature>
<feature type="binding site" evidence="5 10">
    <location>
        <position position="390"/>
    </location>
    <ligand>
        <name>Ca(2+)</name>
        <dbReference type="ChEBI" id="CHEBI:29108"/>
        <label>2</label>
    </ligand>
</feature>
<feature type="binding site" evidence="5 10">
    <location>
        <position position="392"/>
    </location>
    <ligand>
        <name>Ca(2+)</name>
        <dbReference type="ChEBI" id="CHEBI:29108"/>
        <label>1</label>
    </ligand>
</feature>
<feature type="binding site" evidence="5 10">
    <location>
        <position position="395"/>
    </location>
    <ligand>
        <name>Ca(2+)</name>
        <dbReference type="ChEBI" id="CHEBI:29108"/>
        <label>1</label>
    </ligand>
</feature>
<feature type="binding site" evidence="5 10">
    <location>
        <position position="395"/>
    </location>
    <ligand>
        <name>Ca(2+)</name>
        <dbReference type="ChEBI" id="CHEBI:29108"/>
        <label>2</label>
    </ligand>
</feature>
<feature type="binding site" evidence="5 10">
    <location>
        <position position="398"/>
    </location>
    <ligand>
        <name>Ca(2+)</name>
        <dbReference type="ChEBI" id="CHEBI:29108"/>
        <label>3</label>
    </ligand>
</feature>
<feature type="binding site" evidence="5 10">
    <location>
        <position position="399"/>
    </location>
    <ligand>
        <name>Ca(2+)</name>
        <dbReference type="ChEBI" id="CHEBI:29108"/>
        <label>3</label>
    </ligand>
</feature>
<feature type="binding site" evidence="5 10">
    <location>
        <position position="402"/>
    </location>
    <ligand>
        <name>Ca(2+)</name>
        <dbReference type="ChEBI" id="CHEBI:29108"/>
        <label>3</label>
    </ligand>
</feature>
<feature type="binding site" evidence="5 10">
    <location>
        <position position="405"/>
    </location>
    <ligand>
        <name>Ca(2+)</name>
        <dbReference type="ChEBI" id="CHEBI:29108"/>
        <label>3</label>
    </ligand>
</feature>
<feature type="sequence conflict" description="In Ref. 2; AA sequence." evidence="8" ref="2">
    <original>L</original>
    <variation>I</variation>
    <location>
        <position position="354"/>
    </location>
</feature>
<feature type="sequence conflict" description="In Ref. 2; AA sequence." evidence="8" ref="2">
    <original>E</original>
    <variation>Q</variation>
    <location>
        <position position="361"/>
    </location>
</feature>
<feature type="sequence conflict" description="In Ref. 2; AA sequence." evidence="8" ref="2">
    <original>C</original>
    <variation>L</variation>
    <location>
        <position position="479"/>
    </location>
</feature>
<feature type="sequence conflict" description="In Ref. 2; AA sequence." evidence="8" ref="2">
    <original>DE</original>
    <variation>EQ</variation>
    <location>
        <begin position="492"/>
        <end position="493"/>
    </location>
</feature>
<feature type="strand" evidence="11">
    <location>
        <begin position="210"/>
        <end position="216"/>
    </location>
</feature>
<feature type="strand" evidence="11">
    <location>
        <begin position="222"/>
        <end position="230"/>
    </location>
</feature>
<feature type="strand" evidence="11">
    <location>
        <begin position="233"/>
        <end position="238"/>
    </location>
</feature>
<feature type="strand" evidence="11">
    <location>
        <begin position="240"/>
        <end position="243"/>
    </location>
</feature>
<feature type="strand" evidence="11">
    <location>
        <begin position="245"/>
        <end position="251"/>
    </location>
</feature>
<feature type="turn" evidence="11">
    <location>
        <begin position="252"/>
        <end position="255"/>
    </location>
</feature>
<feature type="strand" evidence="11">
    <location>
        <begin position="256"/>
        <end position="259"/>
    </location>
</feature>
<feature type="strand" evidence="11">
    <location>
        <begin position="261"/>
        <end position="267"/>
    </location>
</feature>
<feature type="helix" evidence="11">
    <location>
        <begin position="270"/>
        <end position="272"/>
    </location>
</feature>
<feature type="helix" evidence="11">
    <location>
        <begin position="273"/>
        <end position="293"/>
    </location>
</feature>
<feature type="strand" evidence="11">
    <location>
        <begin position="305"/>
        <end position="310"/>
    </location>
</feature>
<feature type="strand" evidence="11">
    <location>
        <begin position="313"/>
        <end position="318"/>
    </location>
</feature>
<feature type="strand" evidence="11">
    <location>
        <begin position="323"/>
        <end position="325"/>
    </location>
</feature>
<feature type="strand" evidence="11">
    <location>
        <begin position="327"/>
        <end position="332"/>
    </location>
</feature>
<feature type="strand" evidence="11">
    <location>
        <begin position="337"/>
        <end position="341"/>
    </location>
</feature>
<feature type="helix" evidence="11">
    <location>
        <begin position="343"/>
        <end position="345"/>
    </location>
</feature>
<feature type="helix" evidence="11">
    <location>
        <begin position="347"/>
        <end position="361"/>
    </location>
</feature>
<feature type="helix" evidence="11">
    <location>
        <begin position="369"/>
        <end position="386"/>
    </location>
</feature>
<feature type="strand" evidence="11">
    <location>
        <begin position="391"/>
        <end position="394"/>
    </location>
</feature>
<feature type="turn" evidence="11">
    <location>
        <begin position="395"/>
        <end position="397"/>
    </location>
</feature>
<feature type="strand" evidence="12">
    <location>
        <begin position="398"/>
        <end position="401"/>
    </location>
</feature>
<feature type="strand" evidence="11">
    <location>
        <begin position="407"/>
        <end position="411"/>
    </location>
</feature>
<feature type="helix" evidence="11">
    <location>
        <begin position="413"/>
        <end position="416"/>
    </location>
</feature>
<feature type="helix" evidence="11">
    <location>
        <begin position="422"/>
        <end position="424"/>
    </location>
</feature>
<feature type="helix" evidence="11">
    <location>
        <begin position="431"/>
        <end position="438"/>
    </location>
</feature>
<feature type="helix" evidence="11">
    <location>
        <begin position="440"/>
        <end position="453"/>
    </location>
</feature>
<feature type="helix" evidence="11">
    <location>
        <begin position="455"/>
        <end position="468"/>
    </location>
</feature>
<feature type="helix" evidence="11">
    <location>
        <begin position="476"/>
        <end position="490"/>
    </location>
</feature>
<feature type="helix" evidence="11">
    <location>
        <begin position="493"/>
        <end position="504"/>
    </location>
</feature>
<feature type="turn" evidence="11">
    <location>
        <begin position="505"/>
        <end position="507"/>
    </location>
</feature>